<reference key="1">
    <citation type="journal article" date="1993" name="Nucleic Acids Res.">
        <title>Characterization of gene clusters encoding the fucoxanthin chlorophyll proteins of the diatom Phaeodactylum tricornutum.</title>
        <authorList>
            <person name="Bhaya D."/>
            <person name="Grossman A.R."/>
        </authorList>
    </citation>
    <scope>NUCLEOTIDE SEQUENCE [GENOMIC DNA]</scope>
    <source>
        <strain>UTEX 646 / Bohlin</strain>
    </source>
</reference>
<reference key="2">
    <citation type="journal article" date="1990" name="Mol. Gen. Genet.">
        <title>Light-harvesting proteins of diatoms: their relationship to the chlorophyll a/b binding proteins of higher plants and their mode of transport into plastids.</title>
        <authorList>
            <person name="Grossman A."/>
            <person name="Manodori A."/>
            <person name="Snyder D."/>
        </authorList>
    </citation>
    <scope>NUCLEOTIDE SEQUENCE [MRNA]</scope>
    <source>
        <strain>UTEX 646 / Bohlin</strain>
    </source>
</reference>
<name>FCPA_PHATR</name>
<gene>
    <name type="primary">FCPA</name>
    <name type="synonym">FCP1</name>
</gene>
<evidence type="ECO:0000255" key="1"/>
<evidence type="ECO:0000305" key="2"/>
<feature type="transit peptide" description="Chloroplast" evidence="2">
    <location>
        <begin position="1"/>
        <end position="31"/>
    </location>
</feature>
<feature type="chain" id="PRO_0000021234" description="Fucoxanthin-chlorophyll a-c binding protein A, chloroplastic">
    <location>
        <begin position="32"/>
        <end position="196"/>
    </location>
</feature>
<feature type="transmembrane region" description="Helical" evidence="1">
    <location>
        <begin position="73"/>
        <end position="94"/>
    </location>
</feature>
<feature type="transmembrane region" description="Helical" evidence="1">
    <location>
        <begin position="114"/>
        <end position="134"/>
    </location>
</feature>
<feature type="transmembrane region" description="Helical" evidence="1">
    <location>
        <begin position="174"/>
        <end position="196"/>
    </location>
</feature>
<feature type="sequence conflict" description="In Ref. 2; CAA38990." evidence="2" ref="2">
    <original>S</original>
    <variation>F</variation>
    <location>
        <position position="8"/>
    </location>
</feature>
<feature type="sequence conflict" description="In Ref. 2; CAA38990." evidence="2" ref="2">
    <original>R</original>
    <variation>A</variation>
    <location>
        <position position="13"/>
    </location>
</feature>
<feature type="sequence conflict" description="In Ref. 2; CAA38990." evidence="2" ref="2">
    <original>N</original>
    <variation>D</variation>
    <location>
        <position position="56"/>
    </location>
</feature>
<feature type="sequence conflict" description="In Ref. 2; CAA38990." evidence="2" ref="2">
    <original>F</original>
    <variation>L</variation>
    <location>
        <position position="129"/>
    </location>
</feature>
<organism>
    <name type="scientific">Phaeodactylum tricornutum</name>
    <name type="common">Diatom</name>
    <dbReference type="NCBI Taxonomy" id="2850"/>
    <lineage>
        <taxon>Eukaryota</taxon>
        <taxon>Sar</taxon>
        <taxon>Stramenopiles</taxon>
        <taxon>Ochrophyta</taxon>
        <taxon>Bacillariophyta</taxon>
        <taxon>Bacillariophyceae</taxon>
        <taxon>Bacillariophycidae</taxon>
        <taxon>Naviculales</taxon>
        <taxon>Phaeodactylaceae</taxon>
        <taxon>Phaeodactylum</taxon>
    </lineage>
</organism>
<sequence length="196" mass="21272">MKFAVFASLLASRAAFAPAQQSARTSVATNMAFENEIGAQQPLGYWDPLGLVADGNQEKFDRLRYVEIKHGRICMLAVAGYLTQEAGIRLPGDIDYSGTSFESIPNGFAALSAVPGAGIAQIIAFIGFFEIAVMKDITGGEFVGDFRNNYLDFGWDTFSEDKKLQKRAIELNQGRAAQMGILALMVHEQLGVSILP</sequence>
<accession>Q08584</accession>
<accession>Q01272</accession>
<dbReference type="EMBL" id="Z24768">
    <property type="protein sequence ID" value="CAA80894.1"/>
    <property type="molecule type" value="Genomic_DNA"/>
</dbReference>
<dbReference type="EMBL" id="X55250">
    <property type="protein sequence ID" value="CAA38990.1"/>
    <property type="molecule type" value="mRNA"/>
</dbReference>
<dbReference type="PIR" id="S42131">
    <property type="entry name" value="S42131"/>
</dbReference>
<dbReference type="SMR" id="Q08584"/>
<dbReference type="HOGENOM" id="CLU_057943_4_1_1"/>
<dbReference type="GO" id="GO:0009535">
    <property type="term" value="C:chloroplast thylakoid membrane"/>
    <property type="evidence" value="ECO:0007669"/>
    <property type="project" value="UniProtKB-SubCell"/>
</dbReference>
<dbReference type="GO" id="GO:0030076">
    <property type="term" value="C:light-harvesting complex"/>
    <property type="evidence" value="ECO:0007669"/>
    <property type="project" value="UniProtKB-KW"/>
</dbReference>
<dbReference type="GO" id="GO:0009523">
    <property type="term" value="C:photosystem II"/>
    <property type="evidence" value="ECO:0007669"/>
    <property type="project" value="UniProtKB-KW"/>
</dbReference>
<dbReference type="GO" id="GO:0016168">
    <property type="term" value="F:chlorophyll binding"/>
    <property type="evidence" value="ECO:0007669"/>
    <property type="project" value="UniProtKB-KW"/>
</dbReference>
<dbReference type="GO" id="GO:0009765">
    <property type="term" value="P:photosynthesis, light harvesting"/>
    <property type="evidence" value="ECO:0007669"/>
    <property type="project" value="InterPro"/>
</dbReference>
<dbReference type="FunFam" id="1.10.3460.10:FF:000011">
    <property type="entry name" value="Fucoxanthin chlorophyll a/c protein 8"/>
    <property type="match status" value="1"/>
</dbReference>
<dbReference type="Gene3D" id="1.10.3460.10">
    <property type="entry name" value="Chlorophyll a/b binding protein domain"/>
    <property type="match status" value="1"/>
</dbReference>
<dbReference type="InterPro" id="IPR001344">
    <property type="entry name" value="Chloro_AB-bd_pln"/>
</dbReference>
<dbReference type="InterPro" id="IPR022796">
    <property type="entry name" value="Chloroa_b-bind"/>
</dbReference>
<dbReference type="PANTHER" id="PTHR21649">
    <property type="entry name" value="CHLOROPHYLL A/B BINDING PROTEIN"/>
    <property type="match status" value="1"/>
</dbReference>
<dbReference type="Pfam" id="PF00504">
    <property type="entry name" value="Chloroa_b-bind"/>
    <property type="match status" value="1"/>
</dbReference>
<dbReference type="SUPFAM" id="SSF103511">
    <property type="entry name" value="Chlorophyll a-b binding protein"/>
    <property type="match status" value="1"/>
</dbReference>
<comment type="function">
    <text>The light-harvesting complex (LHC) functions as a light receptor, it captures and delivers excitation energy to photosystems with which it is closely associated. Energy is transferred from the carotenoid and chlorophyll C (or B) to chlorophyll A and the photosynthetic reaction centers where it is used to synthesize ATP and reducing power.</text>
</comment>
<comment type="subunit">
    <text>The LHC complex of chromophytic algae is composed of fucoxanthin, chlorophyll A and C bound non-covalently by fucoxanthin chlorophyll proteins (FCPs). The ratio of the pigments in LHC; fucoxanthin: chlorophyll C: chlorophyll A; (0.6-1): (0.1-0.3): (1).</text>
</comment>
<comment type="subcellular location">
    <subcellularLocation>
        <location>Plastid</location>
        <location>Chloroplast thylakoid membrane</location>
        <topology>Multi-pass membrane protein</topology>
    </subcellularLocation>
    <text>FCPs are probably transported across the endoplasmic reticulum membranes that surround the plastid via a signal peptide, followed by translocation across the thylakoid membrane via a transit peptide.</text>
</comment>
<comment type="similarity">
    <text evidence="2">Belongs to the fucoxanthin chlorophyll protein family.</text>
</comment>
<protein>
    <recommendedName>
        <fullName>Fucoxanthin-chlorophyll a-c binding protein A, chloroplastic</fullName>
    </recommendedName>
</protein>
<keyword id="KW-0148">Chlorophyll</keyword>
<keyword id="KW-0150">Chloroplast</keyword>
<keyword id="KW-0157">Chromophore</keyword>
<keyword id="KW-0437">Light-harvesting polypeptide</keyword>
<keyword id="KW-0472">Membrane</keyword>
<keyword id="KW-0602">Photosynthesis</keyword>
<keyword id="KW-0604">Photosystem II</keyword>
<keyword id="KW-0934">Plastid</keyword>
<keyword id="KW-0793">Thylakoid</keyword>
<keyword id="KW-0809">Transit peptide</keyword>
<keyword id="KW-0812">Transmembrane</keyword>
<keyword id="KW-1133">Transmembrane helix</keyword>
<proteinExistence type="evidence at transcript level"/>